<proteinExistence type="evidence at protein level"/>
<feature type="chain" id="PRO_0000095717" description="Bifunctional UDP-N-acetylglucosamine 2-epimerase/N-acetylmannosamine kinase">
    <location>
        <begin position="1"/>
        <end position="722"/>
    </location>
</feature>
<feature type="region of interest" description="UDP-N-acetylglucosamine 2-epimerase" evidence="1">
    <location>
        <begin position="1"/>
        <end status="unknown"/>
    </location>
</feature>
<feature type="region of interest" description="N-acetylmannosamine kinase" evidence="1">
    <location>
        <begin position="406"/>
        <end position="722"/>
    </location>
</feature>
<feature type="active site" evidence="2">
    <location>
        <position position="517"/>
    </location>
</feature>
<feature type="binding site" evidence="2">
    <location>
        <position position="19"/>
    </location>
    <ligand>
        <name>UDP</name>
        <dbReference type="ChEBI" id="CHEBI:58223"/>
    </ligand>
</feature>
<feature type="binding site" evidence="2">
    <location>
        <position position="23"/>
    </location>
    <ligand>
        <name>UDP</name>
        <dbReference type="ChEBI" id="CHEBI:58223"/>
    </ligand>
</feature>
<feature type="binding site" evidence="2">
    <location>
        <position position="113"/>
    </location>
    <ligand>
        <name>UDP</name>
        <dbReference type="ChEBI" id="CHEBI:58223"/>
    </ligand>
</feature>
<feature type="binding site" evidence="2">
    <location>
        <position position="220"/>
    </location>
    <ligand>
        <name>UDP</name>
        <dbReference type="ChEBI" id="CHEBI:58223"/>
    </ligand>
</feature>
<feature type="binding site" evidence="2">
    <location>
        <position position="253"/>
    </location>
    <ligand>
        <name>UDP</name>
        <dbReference type="ChEBI" id="CHEBI:58223"/>
    </ligand>
</feature>
<feature type="binding site" evidence="2">
    <location>
        <position position="259"/>
    </location>
    <ligand>
        <name>CMP-N-acetyl-beta-neuraminate</name>
        <dbReference type="ChEBI" id="CHEBI:57812"/>
        <note>allosteric inhibitor</note>
    </ligand>
</feature>
<feature type="binding site" evidence="2">
    <location>
        <position position="271"/>
    </location>
    <ligand>
        <name>CMP-N-acetyl-beta-neuraminate</name>
        <dbReference type="ChEBI" id="CHEBI:57812"/>
        <note>allosteric inhibitor</note>
    </ligand>
</feature>
<feature type="binding site" evidence="2">
    <location>
        <position position="280"/>
    </location>
    <ligand>
        <name>CMP-N-acetyl-beta-neuraminate</name>
        <dbReference type="ChEBI" id="CHEBI:57812"/>
        <note>allosteric inhibitor</note>
    </ligand>
</feature>
<feature type="binding site" evidence="2">
    <location>
        <position position="281"/>
    </location>
    <ligand>
        <name>CMP-N-acetyl-beta-neuraminate</name>
        <dbReference type="ChEBI" id="CHEBI:57812"/>
        <note>allosteric inhibitor</note>
    </ligand>
</feature>
<feature type="binding site" evidence="2">
    <location>
        <position position="282"/>
    </location>
    <ligand>
        <name>UDP</name>
        <dbReference type="ChEBI" id="CHEBI:58223"/>
    </ligand>
</feature>
<feature type="binding site" evidence="2">
    <location>
        <position position="301"/>
    </location>
    <ligand>
        <name>UDP</name>
        <dbReference type="ChEBI" id="CHEBI:58223"/>
    </ligand>
</feature>
<feature type="binding site" evidence="2">
    <location>
        <position position="302"/>
    </location>
    <ligand>
        <name>UDP</name>
        <dbReference type="ChEBI" id="CHEBI:58223"/>
    </ligand>
</feature>
<feature type="binding site" evidence="2">
    <location>
        <position position="307"/>
    </location>
    <ligand>
        <name>UDP</name>
        <dbReference type="ChEBI" id="CHEBI:58223"/>
    </ligand>
</feature>
<feature type="binding site" evidence="2">
    <location>
        <position position="321"/>
    </location>
    <ligand>
        <name>UDP</name>
        <dbReference type="ChEBI" id="CHEBI:58223"/>
    </ligand>
</feature>
<feature type="binding site" evidence="2">
    <location>
        <position position="413"/>
    </location>
    <ligand>
        <name>Mg(2+)</name>
        <dbReference type="ChEBI" id="CHEBI:18420"/>
    </ligand>
</feature>
<feature type="binding site" evidence="2">
    <location>
        <position position="416"/>
    </location>
    <ligand>
        <name>an N-acyl-D-mannosamine 6-phosphate</name>
        <dbReference type="ChEBI" id="CHEBI:57666"/>
    </ligand>
</feature>
<feature type="binding site" evidence="2">
    <location>
        <position position="417"/>
    </location>
    <ligand>
        <name>ADP</name>
        <dbReference type="ChEBI" id="CHEBI:456216"/>
    </ligand>
</feature>
<feature type="binding site" evidence="2">
    <location>
        <position position="418"/>
    </location>
    <ligand>
        <name>ADP</name>
        <dbReference type="ChEBI" id="CHEBI:456216"/>
    </ligand>
</feature>
<feature type="binding site" evidence="2">
    <location>
        <position position="420"/>
    </location>
    <ligand>
        <name>ADP</name>
        <dbReference type="ChEBI" id="CHEBI:456216"/>
    </ligand>
</feature>
<feature type="binding site" evidence="2">
    <location>
        <position position="476"/>
    </location>
    <ligand>
        <name>an N-acyl-D-mannosamine</name>
        <dbReference type="ChEBI" id="CHEBI:16062"/>
    </ligand>
</feature>
<feature type="binding site" evidence="2">
    <location>
        <position position="476"/>
    </location>
    <ligand>
        <name>an N-acyl-D-mannosamine 6-phosphate</name>
        <dbReference type="ChEBI" id="CHEBI:57666"/>
    </ligand>
</feature>
<feature type="binding site" evidence="2">
    <location>
        <position position="477"/>
    </location>
    <ligand>
        <name>an N-acyl-D-mannosamine</name>
        <dbReference type="ChEBI" id="CHEBI:16062"/>
    </ligand>
</feature>
<feature type="binding site" evidence="2">
    <location>
        <position position="477"/>
    </location>
    <ligand>
        <name>an N-acyl-D-mannosamine 6-phosphate</name>
        <dbReference type="ChEBI" id="CHEBI:57666"/>
    </ligand>
</feature>
<feature type="binding site" evidence="2">
    <location>
        <position position="489"/>
    </location>
    <ligand>
        <name>an N-acyl-D-mannosamine</name>
        <dbReference type="ChEBI" id="CHEBI:16062"/>
    </ligand>
</feature>
<feature type="binding site" evidence="2">
    <location>
        <position position="489"/>
    </location>
    <ligand>
        <name>an N-acyl-D-mannosamine 6-phosphate</name>
        <dbReference type="ChEBI" id="CHEBI:57666"/>
    </ligand>
</feature>
<feature type="binding site" evidence="2">
    <location>
        <position position="516"/>
    </location>
    <ligand>
        <name>an N-acyl-D-mannosamine</name>
        <dbReference type="ChEBI" id="CHEBI:16062"/>
    </ligand>
</feature>
<feature type="binding site" evidence="2">
    <location>
        <position position="516"/>
    </location>
    <ligand>
        <name>an N-acyl-D-mannosamine 6-phosphate</name>
        <dbReference type="ChEBI" id="CHEBI:57666"/>
    </ligand>
</feature>
<feature type="binding site" evidence="2">
    <location>
        <position position="517"/>
    </location>
    <ligand>
        <name>an N-acyl-D-mannosamine</name>
        <dbReference type="ChEBI" id="CHEBI:16062"/>
    </ligand>
</feature>
<feature type="binding site" evidence="2">
    <location>
        <position position="517"/>
    </location>
    <ligand>
        <name>an N-acyl-D-mannosamine 6-phosphate</name>
        <dbReference type="ChEBI" id="CHEBI:57666"/>
    </ligand>
</feature>
<feature type="binding site" evidence="2">
    <location>
        <position position="545"/>
    </location>
    <ligand>
        <name>an N-acyl-D-mannosamine 6-phosphate</name>
        <dbReference type="ChEBI" id="CHEBI:57666"/>
    </ligand>
</feature>
<feature type="binding site" evidence="2">
    <location>
        <position position="566"/>
    </location>
    <ligand>
        <name>an N-acyl-D-mannosamine</name>
        <dbReference type="ChEBI" id="CHEBI:16062"/>
    </ligand>
</feature>
<feature type="binding site" evidence="2">
    <location>
        <position position="569"/>
    </location>
    <ligand>
        <name>an N-acyl-D-mannosamine</name>
        <dbReference type="ChEBI" id="CHEBI:16062"/>
    </ligand>
</feature>
<feature type="binding site" evidence="2">
    <location>
        <position position="569"/>
    </location>
    <ligand>
        <name>an N-acyl-D-mannosamine 6-phosphate</name>
        <dbReference type="ChEBI" id="CHEBI:57666"/>
    </ligand>
</feature>
<feature type="binding site" evidence="2">
    <location>
        <position position="569"/>
    </location>
    <ligand>
        <name>Zn(2+)</name>
        <dbReference type="ChEBI" id="CHEBI:29105"/>
        <note>structural</note>
    </ligand>
</feature>
<feature type="binding site" evidence="2">
    <location>
        <position position="579"/>
    </location>
    <ligand>
        <name>Zn(2+)</name>
        <dbReference type="ChEBI" id="CHEBI:29105"/>
        <note>structural</note>
    </ligand>
</feature>
<feature type="binding site" evidence="2">
    <location>
        <position position="581"/>
    </location>
    <ligand>
        <name>Zn(2+)</name>
        <dbReference type="ChEBI" id="CHEBI:29105"/>
        <note>structural</note>
    </ligand>
</feature>
<feature type="binding site" evidence="2">
    <location>
        <position position="586"/>
    </location>
    <ligand>
        <name>Zn(2+)</name>
        <dbReference type="ChEBI" id="CHEBI:29105"/>
        <note>structural</note>
    </ligand>
</feature>
<feature type="binding site" evidence="2">
    <location>
        <position position="588"/>
    </location>
    <ligand>
        <name>an N-acyl-D-mannosamine</name>
        <dbReference type="ChEBI" id="CHEBI:16062"/>
    </ligand>
</feature>
<feature type="binding site" evidence="2">
    <location>
        <position position="588"/>
    </location>
    <ligand>
        <name>an N-acyl-D-mannosamine 6-phosphate</name>
        <dbReference type="ChEBI" id="CHEBI:57666"/>
    </ligand>
</feature>
<feature type="mutagenesis site" description="Loss-of-function mutant resulting in impaired sialic acid biosynthesis." evidence="6">
    <original>C</original>
    <variation>Y</variation>
    <location>
        <position position="563"/>
    </location>
</feature>
<feature type="mutagenesis site" description="Homozygous embryos exhibit cerebrospinal hemorrhages and defective angiogenesis in the diencephalon at 11 dpc, and become non-viable between 11.5 and 12.5 dpc. Loss-of-function mutant resulting in impaired sialic acid biosynthesis." evidence="6">
    <original>P</original>
    <variation>R</variation>
    <location>
        <position position="704"/>
    </location>
</feature>
<feature type="sequence conflict" description="In Ref. 1; CAB36908." evidence="7" ref="1">
    <original>EL</original>
    <variation>DV</variation>
    <location>
        <begin position="566"/>
        <end position="567"/>
    </location>
</feature>
<feature type="sequence conflict" description="In Ref. 1; CAB36908." evidence="7" ref="1">
    <original>G</original>
    <variation>V</variation>
    <location>
        <position position="623"/>
    </location>
</feature>
<reference key="1">
    <citation type="journal article" date="1999" name="Eur. J. Biochem.">
        <title>Tissue expression and amino acid sequence of murine UDP-N-acetylglucosamine-2-epimerase/N-acetylmannosamine kinase.</title>
        <authorList>
            <person name="Horstkorte R."/>
            <person name="Noehring S."/>
            <person name="Wiechens N."/>
            <person name="Schwarzkopf M."/>
            <person name="Danker K."/>
            <person name="Reutter W."/>
            <person name="Lucka L."/>
        </authorList>
    </citation>
    <scope>NUCLEOTIDE SEQUENCE [MRNA]</scope>
    <scope>TISSUE SPECIFICITY</scope>
    <scope>DEVELOPMENTAL STAGE</scope>
    <source>
        <strain>BALB/cJ</strain>
        <tissue>Liver</tissue>
    </source>
</reference>
<reference key="2">
    <citation type="journal article" date="2004" name="Genome Res.">
        <title>The status, quality, and expansion of the NIH full-length cDNA project: the Mammalian Gene Collection (MGC).</title>
        <authorList>
            <consortium name="The MGC Project Team"/>
        </authorList>
    </citation>
    <scope>NUCLEOTIDE SEQUENCE [LARGE SCALE MRNA]</scope>
    <source>
        <strain>FVB/N</strain>
        <tissue>Colon</tissue>
    </source>
</reference>
<reference key="3">
    <citation type="journal article" date="2005" name="Science">
        <title>The transcriptional landscape of the mammalian genome.</title>
        <authorList>
            <person name="Carninci P."/>
            <person name="Kasukawa T."/>
            <person name="Katayama S."/>
            <person name="Gough J."/>
            <person name="Frith M.C."/>
            <person name="Maeda N."/>
            <person name="Oyama R."/>
            <person name="Ravasi T."/>
            <person name="Lenhard B."/>
            <person name="Wells C."/>
            <person name="Kodzius R."/>
            <person name="Shimokawa K."/>
            <person name="Bajic V.B."/>
            <person name="Brenner S.E."/>
            <person name="Batalov S."/>
            <person name="Forrest A.R."/>
            <person name="Zavolan M."/>
            <person name="Davis M.J."/>
            <person name="Wilming L.G."/>
            <person name="Aidinis V."/>
            <person name="Allen J.E."/>
            <person name="Ambesi-Impiombato A."/>
            <person name="Apweiler R."/>
            <person name="Aturaliya R.N."/>
            <person name="Bailey T.L."/>
            <person name="Bansal M."/>
            <person name="Baxter L."/>
            <person name="Beisel K.W."/>
            <person name="Bersano T."/>
            <person name="Bono H."/>
            <person name="Chalk A.M."/>
            <person name="Chiu K.P."/>
            <person name="Choudhary V."/>
            <person name="Christoffels A."/>
            <person name="Clutterbuck D.R."/>
            <person name="Crowe M.L."/>
            <person name="Dalla E."/>
            <person name="Dalrymple B.P."/>
            <person name="de Bono B."/>
            <person name="Della Gatta G."/>
            <person name="di Bernardo D."/>
            <person name="Down T."/>
            <person name="Engstrom P."/>
            <person name="Fagiolini M."/>
            <person name="Faulkner G."/>
            <person name="Fletcher C.F."/>
            <person name="Fukushima T."/>
            <person name="Furuno M."/>
            <person name="Futaki S."/>
            <person name="Gariboldi M."/>
            <person name="Georgii-Hemming P."/>
            <person name="Gingeras T.R."/>
            <person name="Gojobori T."/>
            <person name="Green R.E."/>
            <person name="Gustincich S."/>
            <person name="Harbers M."/>
            <person name="Hayashi Y."/>
            <person name="Hensch T.K."/>
            <person name="Hirokawa N."/>
            <person name="Hill D."/>
            <person name="Huminiecki L."/>
            <person name="Iacono M."/>
            <person name="Ikeo K."/>
            <person name="Iwama A."/>
            <person name="Ishikawa T."/>
            <person name="Jakt M."/>
            <person name="Kanapin A."/>
            <person name="Katoh M."/>
            <person name="Kawasawa Y."/>
            <person name="Kelso J."/>
            <person name="Kitamura H."/>
            <person name="Kitano H."/>
            <person name="Kollias G."/>
            <person name="Krishnan S.P."/>
            <person name="Kruger A."/>
            <person name="Kummerfeld S.K."/>
            <person name="Kurochkin I.V."/>
            <person name="Lareau L.F."/>
            <person name="Lazarevic D."/>
            <person name="Lipovich L."/>
            <person name="Liu J."/>
            <person name="Liuni S."/>
            <person name="McWilliam S."/>
            <person name="Madan Babu M."/>
            <person name="Madera M."/>
            <person name="Marchionni L."/>
            <person name="Matsuda H."/>
            <person name="Matsuzawa S."/>
            <person name="Miki H."/>
            <person name="Mignone F."/>
            <person name="Miyake S."/>
            <person name="Morris K."/>
            <person name="Mottagui-Tabar S."/>
            <person name="Mulder N."/>
            <person name="Nakano N."/>
            <person name="Nakauchi H."/>
            <person name="Ng P."/>
            <person name="Nilsson R."/>
            <person name="Nishiguchi S."/>
            <person name="Nishikawa S."/>
            <person name="Nori F."/>
            <person name="Ohara O."/>
            <person name="Okazaki Y."/>
            <person name="Orlando V."/>
            <person name="Pang K.C."/>
            <person name="Pavan W.J."/>
            <person name="Pavesi G."/>
            <person name="Pesole G."/>
            <person name="Petrovsky N."/>
            <person name="Piazza S."/>
            <person name="Reed J."/>
            <person name="Reid J.F."/>
            <person name="Ring B.Z."/>
            <person name="Ringwald M."/>
            <person name="Rost B."/>
            <person name="Ruan Y."/>
            <person name="Salzberg S.L."/>
            <person name="Sandelin A."/>
            <person name="Schneider C."/>
            <person name="Schoenbach C."/>
            <person name="Sekiguchi K."/>
            <person name="Semple C.A."/>
            <person name="Seno S."/>
            <person name="Sessa L."/>
            <person name="Sheng Y."/>
            <person name="Shibata Y."/>
            <person name="Shimada H."/>
            <person name="Shimada K."/>
            <person name="Silva D."/>
            <person name="Sinclair B."/>
            <person name="Sperling S."/>
            <person name="Stupka E."/>
            <person name="Sugiura K."/>
            <person name="Sultana R."/>
            <person name="Takenaka Y."/>
            <person name="Taki K."/>
            <person name="Tammoja K."/>
            <person name="Tan S.L."/>
            <person name="Tang S."/>
            <person name="Taylor M.S."/>
            <person name="Tegner J."/>
            <person name="Teichmann S.A."/>
            <person name="Ueda H.R."/>
            <person name="van Nimwegen E."/>
            <person name="Verardo R."/>
            <person name="Wei C.L."/>
            <person name="Yagi K."/>
            <person name="Yamanishi H."/>
            <person name="Zabarovsky E."/>
            <person name="Zhu S."/>
            <person name="Zimmer A."/>
            <person name="Hide W."/>
            <person name="Bult C."/>
            <person name="Grimmond S.M."/>
            <person name="Teasdale R.D."/>
            <person name="Liu E.T."/>
            <person name="Brusic V."/>
            <person name="Quackenbush J."/>
            <person name="Wahlestedt C."/>
            <person name="Mattick J.S."/>
            <person name="Hume D.A."/>
            <person name="Kai C."/>
            <person name="Sasaki D."/>
            <person name="Tomaru Y."/>
            <person name="Fukuda S."/>
            <person name="Kanamori-Katayama M."/>
            <person name="Suzuki M."/>
            <person name="Aoki J."/>
            <person name="Arakawa T."/>
            <person name="Iida J."/>
            <person name="Imamura K."/>
            <person name="Itoh M."/>
            <person name="Kato T."/>
            <person name="Kawaji H."/>
            <person name="Kawagashira N."/>
            <person name="Kawashima T."/>
            <person name="Kojima M."/>
            <person name="Kondo S."/>
            <person name="Konno H."/>
            <person name="Nakano K."/>
            <person name="Ninomiya N."/>
            <person name="Nishio T."/>
            <person name="Okada M."/>
            <person name="Plessy C."/>
            <person name="Shibata K."/>
            <person name="Shiraki T."/>
            <person name="Suzuki S."/>
            <person name="Tagami M."/>
            <person name="Waki K."/>
            <person name="Watahiki A."/>
            <person name="Okamura-Oho Y."/>
            <person name="Suzuki H."/>
            <person name="Kawai J."/>
            <person name="Hayashizaki Y."/>
        </authorList>
    </citation>
    <scope>NUCLEOTIDE SEQUENCE [LARGE SCALE MRNA] OF 572-722</scope>
    <source>
        <strain>C57BL/6J</strain>
        <tissue>Colon</tissue>
    </source>
</reference>
<reference key="4">
    <citation type="journal article" date="2000" name="FEBS Lett.">
        <title>Protein kinase C phosphorylates and regulates UDP-N-acetylglucosamine-2-epimerase/N-acetylmannosamine kinase.</title>
        <authorList>
            <person name="Horstkorte R."/>
            <person name="Noehring S."/>
            <person name="Danker K."/>
            <person name="Effertz K."/>
            <person name="Reutter W."/>
            <person name="Lucka L."/>
        </authorList>
    </citation>
    <scope>CATALYTIC ACTIVITY</scope>
    <scope>ACTIVITY REGULATION</scope>
    <scope>PHOSPHORYLATION</scope>
</reference>
<reference key="5">
    <citation type="journal article" date="2002" name="Proc. Natl. Acad. Sci. U.S.A.">
        <title>Sialylation is essential for early development in mice.</title>
        <authorList>
            <person name="Schwarzkopf M."/>
            <person name="Knobeloch K.-P."/>
            <person name="Rohde E."/>
            <person name="Hinderlich S."/>
            <person name="Wiechens N."/>
            <person name="Lucka L."/>
            <person name="Horak I."/>
            <person name="Reutter W."/>
            <person name="Horstkorte R."/>
        </authorList>
    </citation>
    <scope>FUNCTION</scope>
    <scope>CATALYTIC ACTIVITY</scope>
    <scope>PATHWAY</scope>
    <scope>DISRUPTION PHENOTYPE</scope>
</reference>
<reference key="6">
    <citation type="journal article" date="2010" name="Cell">
        <title>A tissue-specific atlas of mouse protein phosphorylation and expression.</title>
        <authorList>
            <person name="Huttlin E.L."/>
            <person name="Jedrychowski M.P."/>
            <person name="Elias J.E."/>
            <person name="Goswami T."/>
            <person name="Rad R."/>
            <person name="Beausoleil S.A."/>
            <person name="Villen J."/>
            <person name="Haas W."/>
            <person name="Sowa M.E."/>
            <person name="Gygi S.P."/>
        </authorList>
    </citation>
    <scope>IDENTIFICATION BY MASS SPECTROMETRY [LARGE SCALE ANALYSIS]</scope>
    <source>
        <tissue>Kidney</tissue>
        <tissue>Liver</tissue>
        <tissue>Lung</tissue>
        <tissue>Spleen</tissue>
        <tissue>Testis</tissue>
    </source>
</reference>
<reference key="7">
    <citation type="journal article" date="2024" name="Blood Adv.">
        <title>Novel GNE missense variants impair de novo sialylation and cause defective angiogenesis in the developing brain in mice.</title>
        <authorList>
            <person name="Huang L."/>
            <person name="Kondo Y."/>
            <person name="Cao L."/>
            <person name="Han J."/>
            <person name="Li T."/>
            <person name="Zuo B."/>
            <person name="Yang F."/>
            <person name="Li Y."/>
            <person name="Ma Z."/>
            <person name="Bai X."/>
            <person name="Jiang M."/>
            <person name="Ruan C."/>
            <person name="Xia L."/>
        </authorList>
    </citation>
    <scope>MUTAGENESIS OF CYS-563 AND PRO-704</scope>
    <scope>FUNCTION</scope>
</reference>
<comment type="function">
    <text evidence="2 5 6">Bifunctional enzyme that possesses both UDP-N-acetylglucosamine 2-epimerase and N-acetylmannosamine kinase activities, and serves as the initiator of the biosynthetic pathway leading to the production of N-acetylneuraminic acid (NeuAc), a critical precursor in the synthesis of sialic acids. By catalyzing this pivotal and rate-limiting step in sialic acid biosynthesis, this enzyme assumes a pivotal role in governing the regulation of cell surface sialylation, playing a role in embryonic angiogenesis (PubMed:11929971, PubMed:38237079). Sialic acids represent a category of negatively charged sugars that reside on the surface of cells as terminal components of glycoconjugates and mediate important functions in various cellular processes, including cell adhesion, signal transduction, and cellular recognition (By similarity).</text>
</comment>
<comment type="catalytic activity">
    <reaction evidence="4 5">
        <text>UDP-N-acetyl-alpha-D-glucosamine + H2O = aldehydo-N-acetyl-D-mannosamine + UDP + H(+)</text>
        <dbReference type="Rhea" id="RHEA:30683"/>
        <dbReference type="ChEBI" id="CHEBI:15377"/>
        <dbReference type="ChEBI" id="CHEBI:15378"/>
        <dbReference type="ChEBI" id="CHEBI:17122"/>
        <dbReference type="ChEBI" id="CHEBI:57705"/>
        <dbReference type="ChEBI" id="CHEBI:58223"/>
        <dbReference type="EC" id="3.2.1.183"/>
    </reaction>
    <physiologicalReaction direction="left-to-right" evidence="5">
        <dbReference type="Rhea" id="RHEA:30684"/>
    </physiologicalReaction>
</comment>
<comment type="catalytic activity">
    <reaction evidence="2">
        <text>an N-acyl-D-mannosamine + ATP = an N-acyl-D-mannosamine 6-phosphate + ADP + H(+)</text>
        <dbReference type="Rhea" id="RHEA:23832"/>
        <dbReference type="ChEBI" id="CHEBI:15378"/>
        <dbReference type="ChEBI" id="CHEBI:16062"/>
        <dbReference type="ChEBI" id="CHEBI:30616"/>
        <dbReference type="ChEBI" id="CHEBI:57666"/>
        <dbReference type="ChEBI" id="CHEBI:456216"/>
        <dbReference type="EC" id="2.7.1.60"/>
    </reaction>
    <physiologicalReaction direction="left-to-right" evidence="2">
        <dbReference type="Rhea" id="RHEA:23833"/>
    </physiologicalReaction>
</comment>
<comment type="activity regulation">
    <text evidence="1 2 4">The UDP-N-acetylglucosamine 2-epimerase activity, in contrast to the N-acetylmannosamine kinase activity, exhibits allosteric regulation by cytidine monophosphate-N-acetylneuraminic acid (CMP-Neu5Ac), the end product of neuraminic acid biosynthesis (By similarity). Moreover, the activity is contingent upon the oligomeric state of the enzyme. The monomeric form is inactive, while the dimeric form selectively catalyzes the phosphorylation of N-acetylmannosamine. The hexameric form, on the other hand, demonstrates full proficiency in both enzyme activities (By similarity). Furthermore, the UDP-N-acetylglucosamine 2-epimerase activity is increased by PKC-mediated phosphorylation (PubMed:10745088).</text>
</comment>
<comment type="pathway">
    <text evidence="5">Amino-sugar metabolism; N-acetylneuraminate biosynthesis.</text>
</comment>
<comment type="subunit">
    <text evidence="1 2">Homodimer. Homotetramer. Homohexamer (By similarity). The hexameric form exhibits both enzyme activities, whereas the dimeric form only catalyzes the phosphorylation of N-acyl-D-mannosamine (By similarity).</text>
</comment>
<comment type="subcellular location">
    <subcellularLocation>
        <location evidence="1">Cytoplasm</location>
        <location evidence="1">Cytosol</location>
    </subcellularLocation>
</comment>
<comment type="tissue specificity">
    <text evidence="3">Widely expressed. Highest expression in liver. Also found at high levels in lung, brain and kidney.</text>
</comment>
<comment type="developmental stage">
    <text evidence="3">In the embryo, expressed at day 7 dpc, 11 dpc and 15 dpc.</text>
</comment>
<comment type="PTM">
    <text evidence="4">Phosphorylated. Phosphorylation by PKC activates the UDP-N-acetylglucosamine 2-epimerase activity.</text>
</comment>
<comment type="disruption phenotype">
    <text evidence="5">Knockout of the gene is embryonic lethal.</text>
</comment>
<comment type="similarity">
    <text evidence="7">In the N-terminal section; belongs to the UDP-N-acetylglucosamine 2-epimerase family.</text>
</comment>
<comment type="similarity">
    <text evidence="7">In the C-terminal section; belongs to the ROK (NagC/XylR) family.</text>
</comment>
<protein>
    <recommendedName>
        <fullName evidence="7">Bifunctional UDP-N-acetylglucosamine 2-epimerase/N-acetylmannosamine kinase</fullName>
    </recommendedName>
    <alternativeName>
        <fullName>UDP-GlcNAc-2-epimerase/ManAc kinase</fullName>
    </alternativeName>
    <domain>
        <recommendedName>
            <fullName evidence="8">UDP-N-acetylglucosamine 2-epimerase (hydrolyzing)</fullName>
            <ecNumber evidence="4 5">3.2.1.183</ecNumber>
        </recommendedName>
        <alternativeName>
            <fullName>UDP-GlcNAc-2-epimerase</fullName>
        </alternativeName>
        <alternativeName>
            <fullName>Uridine diphosphate-N-acetylglucosamine-2-epimerase</fullName>
        </alternativeName>
    </domain>
    <domain>
        <recommendedName>
            <fullName evidence="2">N-acetylmannosamine kinase</fullName>
            <ecNumber evidence="2">2.7.1.60</ecNumber>
        </recommendedName>
        <alternativeName>
            <fullName>ManAc kinase</fullName>
        </alternativeName>
    </domain>
</protein>
<sequence>MEKNGNNRKLRVCVATCNRADYSKLAPIMFGIKTEPAFFELDVVVLGSHLIDDYGNTYRMIEQDDFDINTRLHTIVRGEDEAAMVESVGLALVKLPDVLNRLKPDIMIVHGDRFDALALATSAALMNIRILHIEGGEVSGTIDDSIRHAITKLAHYHVCCTRSAEQHLISMCEDHDRILLAGCPSYDKLLSAKNKDYMSIIRMWLGDDVKCKDYIVALQHPVTTDIKHSIKMFELTLDALISFNKRTLVLFPNIDAGSKEMVRVMRKKGIEHHPNFRAVKHVPFDQFIQLVAHAGCMIGNSSCGVREVGAFGTPVINLGTRQIGRETGENVLHVRDADTQDKILQALHLQFGKQYPCSKIYGDGNAVPRILKFLKSIDLQEPLQKKFCFPPVKENISQDIDHILETLSALAVDLGGTNLRVAIVSMKGEIVKKYTQFNPKTYEERISLILQMCVEAAAEAVKLNCRILGVGISTGGRVNPQEGVVLHSTKLIQEWNSVDLRTPLSDTLHLPVWVDNDGNCAAMAERKFGQGKGQENFVTLITGTGIGGGIIHQHELIHGSSFCAAELGHLVVSLDGPDCSCGSHGCIEAYASGMALQREAKKLHDEDLLLVEGMSVPKDEAVGALHLIQAAKLGNVKAQSILRTAGTALGLGVVNILHTMNPSLVILSGVLASHYIHIVKDVIRQQALSSVQDVDVVVSDLVDPALLGAASMVLDYTTRRIH</sequence>
<dbReference type="EC" id="3.2.1.183" evidence="4 5"/>
<dbReference type="EC" id="2.7.1.60" evidence="2"/>
<dbReference type="EMBL" id="AJ132236">
    <property type="protein sequence ID" value="CAB36908.1"/>
    <property type="molecule type" value="mRNA"/>
</dbReference>
<dbReference type="EMBL" id="BC015277">
    <property type="protein sequence ID" value="AAH15277.1"/>
    <property type="molecule type" value="mRNA"/>
</dbReference>
<dbReference type="EMBL" id="BC051254">
    <property type="protein sequence ID" value="AAH51254.1"/>
    <property type="molecule type" value="mRNA"/>
</dbReference>
<dbReference type="EMBL" id="AK033507">
    <property type="protein sequence ID" value="BAC28328.1"/>
    <property type="molecule type" value="mRNA"/>
</dbReference>
<dbReference type="EMBL" id="AK033691">
    <property type="protein sequence ID" value="BAC28432.1"/>
    <property type="molecule type" value="mRNA"/>
</dbReference>
<dbReference type="CCDS" id="CCDS51170.1"/>
<dbReference type="RefSeq" id="NP_001177343.1">
    <property type="nucleotide sequence ID" value="NM_001190414.2"/>
</dbReference>
<dbReference type="RefSeq" id="NP_056643.3">
    <property type="nucleotide sequence ID" value="NM_015828.3"/>
</dbReference>
<dbReference type="SMR" id="Q91WG8"/>
<dbReference type="BioGRID" id="206129">
    <property type="interactions" value="1"/>
</dbReference>
<dbReference type="FunCoup" id="Q91WG8">
    <property type="interactions" value="329"/>
</dbReference>
<dbReference type="STRING" id="10090.ENSMUSP00000030201"/>
<dbReference type="iPTMnet" id="Q91WG8"/>
<dbReference type="PhosphoSitePlus" id="Q91WG8"/>
<dbReference type="SwissPalm" id="Q91WG8"/>
<dbReference type="jPOST" id="Q91WG8"/>
<dbReference type="PaxDb" id="10090-ENSMUSP00000030201"/>
<dbReference type="ProteomicsDB" id="267633"/>
<dbReference type="Pumba" id="Q91WG8"/>
<dbReference type="Antibodypedia" id="2058">
    <property type="antibodies" value="245 antibodies from 28 providers"/>
</dbReference>
<dbReference type="DNASU" id="50798"/>
<dbReference type="Ensembl" id="ENSMUST00000102936.9">
    <property type="protein sequence ID" value="ENSMUSP00000100000.3"/>
    <property type="gene ID" value="ENSMUSG00000028479.19"/>
</dbReference>
<dbReference type="GeneID" id="50798"/>
<dbReference type="KEGG" id="mmu:50798"/>
<dbReference type="UCSC" id="uc008srm.2">
    <property type="organism name" value="mouse"/>
</dbReference>
<dbReference type="AGR" id="MGI:1354951"/>
<dbReference type="CTD" id="10020"/>
<dbReference type="MGI" id="MGI:1354951">
    <property type="gene designation" value="Gne"/>
</dbReference>
<dbReference type="VEuPathDB" id="HostDB:ENSMUSG00000028479"/>
<dbReference type="eggNOG" id="ENOG502QUGI">
    <property type="taxonomic scope" value="Eukaryota"/>
</dbReference>
<dbReference type="GeneTree" id="ENSGT00390000017246"/>
<dbReference type="InParanoid" id="Q91WG8"/>
<dbReference type="OMA" id="HELYFKK"/>
<dbReference type="OrthoDB" id="2968753at2759"/>
<dbReference type="BRENDA" id="2.7.1.60">
    <property type="organism ID" value="3474"/>
</dbReference>
<dbReference type="BRENDA" id="3.2.1.183">
    <property type="organism ID" value="3474"/>
</dbReference>
<dbReference type="Reactome" id="R-MMU-4085001">
    <property type="pathway name" value="Sialic acid metabolism"/>
</dbReference>
<dbReference type="UniPathway" id="UPA00630"/>
<dbReference type="BioGRID-ORCS" id="50798">
    <property type="hits" value="12 hits in 83 CRISPR screens"/>
</dbReference>
<dbReference type="ChiTaRS" id="Gne">
    <property type="organism name" value="mouse"/>
</dbReference>
<dbReference type="PRO" id="PR:Q91WG8"/>
<dbReference type="Proteomes" id="UP000000589">
    <property type="component" value="Chromosome 4"/>
</dbReference>
<dbReference type="RNAct" id="Q91WG8">
    <property type="molecule type" value="protein"/>
</dbReference>
<dbReference type="Bgee" id="ENSMUSG00000028479">
    <property type="expression patterns" value="Expressed in submandibular gland and 265 other cell types or tissues"/>
</dbReference>
<dbReference type="ExpressionAtlas" id="Q91WG8">
    <property type="expression patterns" value="baseline and differential"/>
</dbReference>
<dbReference type="GO" id="GO:0005829">
    <property type="term" value="C:cytosol"/>
    <property type="evidence" value="ECO:0000314"/>
    <property type="project" value="MGI"/>
</dbReference>
<dbReference type="GO" id="GO:0005524">
    <property type="term" value="F:ATP binding"/>
    <property type="evidence" value="ECO:0007669"/>
    <property type="project" value="UniProtKB-KW"/>
</dbReference>
<dbReference type="GO" id="GO:0003824">
    <property type="term" value="F:catalytic activity"/>
    <property type="evidence" value="ECO:0000250"/>
    <property type="project" value="MGI"/>
</dbReference>
<dbReference type="GO" id="GO:0004553">
    <property type="term" value="F:hydrolase activity, hydrolyzing O-glycosyl compounds"/>
    <property type="evidence" value="ECO:0007669"/>
    <property type="project" value="InterPro"/>
</dbReference>
<dbReference type="GO" id="GO:0046872">
    <property type="term" value="F:metal ion binding"/>
    <property type="evidence" value="ECO:0007669"/>
    <property type="project" value="UniProtKB-KW"/>
</dbReference>
<dbReference type="GO" id="GO:0009384">
    <property type="term" value="F:N-acylmannosamine kinase activity"/>
    <property type="evidence" value="ECO:0000315"/>
    <property type="project" value="MGI"/>
</dbReference>
<dbReference type="GO" id="GO:0008761">
    <property type="term" value="F:UDP-N-acetylglucosamine 2-epimerase activity"/>
    <property type="evidence" value="ECO:0000314"/>
    <property type="project" value="UniProtKB"/>
</dbReference>
<dbReference type="GO" id="GO:0006055">
    <property type="term" value="P:CMP-N-acetylneuraminate biosynthetic process"/>
    <property type="evidence" value="ECO:0000315"/>
    <property type="project" value="MGI"/>
</dbReference>
<dbReference type="GO" id="GO:0070085">
    <property type="term" value="P:glycosylation"/>
    <property type="evidence" value="ECO:0007669"/>
    <property type="project" value="Ensembl"/>
</dbReference>
<dbReference type="GO" id="GO:0006045">
    <property type="term" value="P:N-acetylglucosamine biosynthetic process"/>
    <property type="evidence" value="ECO:0007669"/>
    <property type="project" value="UniProtKB-UniPathway"/>
</dbReference>
<dbReference type="GO" id="GO:0046380">
    <property type="term" value="P:N-acetylneuraminate biosynthetic process"/>
    <property type="evidence" value="ECO:0000315"/>
    <property type="project" value="UniProtKB"/>
</dbReference>
<dbReference type="GO" id="GO:0006054">
    <property type="term" value="P:N-acetylneuraminate metabolic process"/>
    <property type="evidence" value="ECO:0000315"/>
    <property type="project" value="MGI"/>
</dbReference>
<dbReference type="GO" id="GO:0006047">
    <property type="term" value="P:UDP-N-acetylglucosamine metabolic process"/>
    <property type="evidence" value="ECO:0007669"/>
    <property type="project" value="InterPro"/>
</dbReference>
<dbReference type="CDD" id="cd24060">
    <property type="entry name" value="ASKHA_NBD_ROK_GNE"/>
    <property type="match status" value="1"/>
</dbReference>
<dbReference type="CDD" id="cd03786">
    <property type="entry name" value="GTB_UDP-GlcNAc_2-Epimerase"/>
    <property type="match status" value="1"/>
</dbReference>
<dbReference type="FunFam" id="3.30.420.40:FF:000053">
    <property type="entry name" value="Bifunctional UDP-N-acetylglucosamine 2-epimerase/N-acetylmannosamine kinase"/>
    <property type="match status" value="1"/>
</dbReference>
<dbReference type="FunFam" id="3.30.420.40:FF:000060">
    <property type="entry name" value="Bifunctional UDP-N-acetylglucosamine 2-epimerase/N-acetylmannosamine kinase"/>
    <property type="match status" value="1"/>
</dbReference>
<dbReference type="FunFam" id="3.40.50.2000:FF:000013">
    <property type="entry name" value="Bifunctional UDP-N-acetylglucosamine 2-epimerase/N-acetylmannosamine kinase"/>
    <property type="match status" value="1"/>
</dbReference>
<dbReference type="FunFam" id="3.40.50.2000:FF:000015">
    <property type="entry name" value="Bifunctional UDP-N-acetylglucosamine 2-epimerase/N-acetylmannosamine kinase"/>
    <property type="match status" value="1"/>
</dbReference>
<dbReference type="Gene3D" id="3.30.420.40">
    <property type="match status" value="2"/>
</dbReference>
<dbReference type="Gene3D" id="3.40.50.2000">
    <property type="entry name" value="Glycogen Phosphorylase B"/>
    <property type="match status" value="2"/>
</dbReference>
<dbReference type="InterPro" id="IPR043129">
    <property type="entry name" value="ATPase_NBD"/>
</dbReference>
<dbReference type="InterPro" id="IPR000600">
    <property type="entry name" value="ROK"/>
</dbReference>
<dbReference type="InterPro" id="IPR020004">
    <property type="entry name" value="UDP-GlcNAc_Epase"/>
</dbReference>
<dbReference type="InterPro" id="IPR003331">
    <property type="entry name" value="UDP_GlcNAc_Epimerase_2_dom"/>
</dbReference>
<dbReference type="NCBIfam" id="TIGR03568">
    <property type="entry name" value="NeuC_NnaA"/>
    <property type="match status" value="1"/>
</dbReference>
<dbReference type="PANTHER" id="PTHR18964:SF149">
    <property type="entry name" value="BIFUNCTIONAL UDP-N-ACETYLGLUCOSAMINE 2-EPIMERASE_N-ACETYLMANNOSAMINE KINASE"/>
    <property type="match status" value="1"/>
</dbReference>
<dbReference type="PANTHER" id="PTHR18964">
    <property type="entry name" value="ROK (REPRESSOR, ORF, KINASE) FAMILY"/>
    <property type="match status" value="1"/>
</dbReference>
<dbReference type="Pfam" id="PF02350">
    <property type="entry name" value="Epimerase_2"/>
    <property type="match status" value="1"/>
</dbReference>
<dbReference type="Pfam" id="PF00480">
    <property type="entry name" value="ROK"/>
    <property type="match status" value="1"/>
</dbReference>
<dbReference type="PRINTS" id="PR00475">
    <property type="entry name" value="HEXOKINASE"/>
</dbReference>
<dbReference type="SUPFAM" id="SSF53067">
    <property type="entry name" value="Actin-like ATPase domain"/>
    <property type="match status" value="1"/>
</dbReference>
<dbReference type="SUPFAM" id="SSF53756">
    <property type="entry name" value="UDP-Glycosyltransferase/glycogen phosphorylase"/>
    <property type="match status" value="1"/>
</dbReference>
<name>GLCNE_MOUSE</name>
<organism>
    <name type="scientific">Mus musculus</name>
    <name type="common">Mouse</name>
    <dbReference type="NCBI Taxonomy" id="10090"/>
    <lineage>
        <taxon>Eukaryota</taxon>
        <taxon>Metazoa</taxon>
        <taxon>Chordata</taxon>
        <taxon>Craniata</taxon>
        <taxon>Vertebrata</taxon>
        <taxon>Euteleostomi</taxon>
        <taxon>Mammalia</taxon>
        <taxon>Eutheria</taxon>
        <taxon>Euarchontoglires</taxon>
        <taxon>Glires</taxon>
        <taxon>Rodentia</taxon>
        <taxon>Myomorpha</taxon>
        <taxon>Muroidea</taxon>
        <taxon>Muridae</taxon>
        <taxon>Murinae</taxon>
        <taxon>Mus</taxon>
        <taxon>Mus</taxon>
    </lineage>
</organism>
<gene>
    <name evidence="9" type="primary">Gne</name>
    <name type="synonym">Glcne</name>
    <name type="synonym">Uae1</name>
</gene>
<accession>Q91WG8</accession>
<accession>Q8CC83</accession>
<accession>Q8CCB0</accession>
<accession>Q9Z0P6</accession>
<evidence type="ECO:0000250" key="1">
    <source>
        <dbReference type="UniProtKB" id="O35826"/>
    </source>
</evidence>
<evidence type="ECO:0000250" key="2">
    <source>
        <dbReference type="UniProtKB" id="Q9Y223"/>
    </source>
</evidence>
<evidence type="ECO:0000269" key="3">
    <source>
    </source>
</evidence>
<evidence type="ECO:0000269" key="4">
    <source>
    </source>
</evidence>
<evidence type="ECO:0000269" key="5">
    <source>
    </source>
</evidence>
<evidence type="ECO:0000269" key="6">
    <source>
    </source>
</evidence>
<evidence type="ECO:0000305" key="7"/>
<evidence type="ECO:0000305" key="8">
    <source>
    </source>
</evidence>
<evidence type="ECO:0000312" key="9">
    <source>
        <dbReference type="MGI" id="MGI:1354951"/>
    </source>
</evidence>
<keyword id="KW-0021">Allosteric enzyme</keyword>
<keyword id="KW-0067">ATP-binding</keyword>
<keyword id="KW-0963">Cytoplasm</keyword>
<keyword id="KW-0378">Hydrolase</keyword>
<keyword id="KW-0418">Kinase</keyword>
<keyword id="KW-0460">Magnesium</keyword>
<keyword id="KW-0479">Metal-binding</keyword>
<keyword id="KW-0511">Multifunctional enzyme</keyword>
<keyword id="KW-0547">Nucleotide-binding</keyword>
<keyword id="KW-0597">Phosphoprotein</keyword>
<keyword id="KW-1185">Reference proteome</keyword>
<keyword id="KW-0808">Transferase</keyword>
<keyword id="KW-0862">Zinc</keyword>